<gene>
    <name evidence="1" type="primary">hutI</name>
    <name type="ordered locus">FP1780</name>
</gene>
<keyword id="KW-0963">Cytoplasm</keyword>
<keyword id="KW-0369">Histidine metabolism</keyword>
<keyword id="KW-0378">Hydrolase</keyword>
<keyword id="KW-0408">Iron</keyword>
<keyword id="KW-0479">Metal-binding</keyword>
<keyword id="KW-1185">Reference proteome</keyword>
<keyword id="KW-0862">Zinc</keyword>
<protein>
    <recommendedName>
        <fullName evidence="1">Imidazolonepropionase</fullName>
        <ecNumber evidence="1">3.5.2.7</ecNumber>
    </recommendedName>
    <alternativeName>
        <fullName evidence="1">Imidazolone-5-propionate hydrolase</fullName>
    </alternativeName>
</protein>
<sequence length="411" mass="45181">MKTLIINIKELLQVRDNHIDKVSGTEMGVLPKIDDAFLLIEDNLIANFGSMSNCPTIKTDQTIDAKGKIVLPTWCDSHTHIVYAGNRIQEFVDRIKGLSYEEIANRGGGILNSAKNLNQTSEEDIYNQSKVRLEEIMQQGTGAVEIKSGYGLTVDGEIKMLRVIKKLAANYPIKIKATFLGAHAFPSEYKENHADYINLIVNEMLPKIAAEKLADYIDVFLETGYFSVQETEKIIEAGKKYGLIPKIHVNQFTAIGGIKSCVKHEALSVDHLEIVTNEDIENLKGSKTMPVALPSCSYFISIPYTPARKMIAAGLPLALATDYNPGTTPSGNMNFVVATACIKMKMTPEEAINAATINGAYAMGISQTHGSITKGKSANIIITKPLTTYYEMAYSFTSNLIENVFIEGKII</sequence>
<organism>
    <name type="scientific">Flavobacterium psychrophilum (strain ATCC 49511 / DSM 21280 / CIP 103535 / JIP02/86)</name>
    <dbReference type="NCBI Taxonomy" id="402612"/>
    <lineage>
        <taxon>Bacteria</taxon>
        <taxon>Pseudomonadati</taxon>
        <taxon>Bacteroidota</taxon>
        <taxon>Flavobacteriia</taxon>
        <taxon>Flavobacteriales</taxon>
        <taxon>Flavobacteriaceae</taxon>
        <taxon>Flavobacterium</taxon>
    </lineage>
</organism>
<reference key="1">
    <citation type="journal article" date="2007" name="Nat. Biotechnol.">
        <title>Complete genome sequence of the fish pathogen Flavobacterium psychrophilum.</title>
        <authorList>
            <person name="Duchaud E."/>
            <person name="Boussaha M."/>
            <person name="Loux V."/>
            <person name="Bernardet J.-F."/>
            <person name="Michel C."/>
            <person name="Kerouault B."/>
            <person name="Mondot S."/>
            <person name="Nicolas P."/>
            <person name="Bossy R."/>
            <person name="Caron C."/>
            <person name="Bessieres P."/>
            <person name="Gibrat J.-F."/>
            <person name="Claverol S."/>
            <person name="Dumetz F."/>
            <person name="Le Henaff M."/>
            <person name="Benmansour A."/>
        </authorList>
    </citation>
    <scope>NUCLEOTIDE SEQUENCE [LARGE SCALE GENOMIC DNA]</scope>
    <source>
        <strain>ATCC 49511 / DSM 21280 / CIP 103535 / JIP02/86</strain>
    </source>
</reference>
<accession>A6H0H4</accession>
<comment type="function">
    <text evidence="1">Catalyzes the hydrolytic cleavage of the carbon-nitrogen bond in imidazolone-5-propanoate to yield N-formimidoyl-L-glutamate. It is the third step in the universal histidine degradation pathway.</text>
</comment>
<comment type="catalytic activity">
    <reaction evidence="1">
        <text>4-imidazolone-5-propanoate + H2O = N-formimidoyl-L-glutamate</text>
        <dbReference type="Rhea" id="RHEA:23660"/>
        <dbReference type="ChEBI" id="CHEBI:15377"/>
        <dbReference type="ChEBI" id="CHEBI:58928"/>
        <dbReference type="ChEBI" id="CHEBI:77893"/>
        <dbReference type="EC" id="3.5.2.7"/>
    </reaction>
</comment>
<comment type="cofactor">
    <cofactor evidence="1">
        <name>Zn(2+)</name>
        <dbReference type="ChEBI" id="CHEBI:29105"/>
    </cofactor>
    <cofactor evidence="1">
        <name>Fe(3+)</name>
        <dbReference type="ChEBI" id="CHEBI:29034"/>
    </cofactor>
    <text evidence="1">Binds 1 zinc or iron ion per subunit.</text>
</comment>
<comment type="pathway">
    <text evidence="1">Amino-acid degradation; L-histidine degradation into L-glutamate; N-formimidoyl-L-glutamate from L-histidine: step 3/3.</text>
</comment>
<comment type="subcellular location">
    <subcellularLocation>
        <location evidence="1">Cytoplasm</location>
    </subcellularLocation>
</comment>
<comment type="similarity">
    <text evidence="1">Belongs to the metallo-dependent hydrolases superfamily. HutI family.</text>
</comment>
<name>HUTI_FLAPJ</name>
<evidence type="ECO:0000255" key="1">
    <source>
        <dbReference type="HAMAP-Rule" id="MF_00372"/>
    </source>
</evidence>
<dbReference type="EC" id="3.5.2.7" evidence="1"/>
<dbReference type="EMBL" id="AM398681">
    <property type="protein sequence ID" value="CAL43847.1"/>
    <property type="molecule type" value="Genomic_DNA"/>
</dbReference>
<dbReference type="RefSeq" id="WP_011963888.1">
    <property type="nucleotide sequence ID" value="NC_009613.3"/>
</dbReference>
<dbReference type="RefSeq" id="YP_001296652.1">
    <property type="nucleotide sequence ID" value="NC_009613.3"/>
</dbReference>
<dbReference type="SMR" id="A6H0H4"/>
<dbReference type="STRING" id="402612.FP1780"/>
<dbReference type="EnsemblBacteria" id="CAL43847">
    <property type="protein sequence ID" value="CAL43847"/>
    <property type="gene ID" value="FP1780"/>
</dbReference>
<dbReference type="GeneID" id="66552033"/>
<dbReference type="KEGG" id="fps:FP1780"/>
<dbReference type="PATRIC" id="fig|402612.5.peg.1801"/>
<dbReference type="eggNOG" id="COG1228">
    <property type="taxonomic scope" value="Bacteria"/>
</dbReference>
<dbReference type="HOGENOM" id="CLU_041647_0_1_10"/>
<dbReference type="OrthoDB" id="9776455at2"/>
<dbReference type="UniPathway" id="UPA00379">
    <property type="reaction ID" value="UER00551"/>
</dbReference>
<dbReference type="Proteomes" id="UP000006394">
    <property type="component" value="Chromosome"/>
</dbReference>
<dbReference type="GO" id="GO:0005737">
    <property type="term" value="C:cytoplasm"/>
    <property type="evidence" value="ECO:0007669"/>
    <property type="project" value="UniProtKB-SubCell"/>
</dbReference>
<dbReference type="GO" id="GO:0050480">
    <property type="term" value="F:imidazolonepropionase activity"/>
    <property type="evidence" value="ECO:0007669"/>
    <property type="project" value="UniProtKB-UniRule"/>
</dbReference>
<dbReference type="GO" id="GO:0005506">
    <property type="term" value="F:iron ion binding"/>
    <property type="evidence" value="ECO:0007669"/>
    <property type="project" value="UniProtKB-UniRule"/>
</dbReference>
<dbReference type="GO" id="GO:0008270">
    <property type="term" value="F:zinc ion binding"/>
    <property type="evidence" value="ECO:0007669"/>
    <property type="project" value="UniProtKB-UniRule"/>
</dbReference>
<dbReference type="GO" id="GO:0019556">
    <property type="term" value="P:L-histidine catabolic process to glutamate and formamide"/>
    <property type="evidence" value="ECO:0007669"/>
    <property type="project" value="UniProtKB-UniPathway"/>
</dbReference>
<dbReference type="GO" id="GO:0019557">
    <property type="term" value="P:L-histidine catabolic process to glutamate and formate"/>
    <property type="evidence" value="ECO:0007669"/>
    <property type="project" value="UniProtKB-UniPathway"/>
</dbReference>
<dbReference type="FunFam" id="3.20.20.140:FF:000007">
    <property type="entry name" value="Imidazolonepropionase"/>
    <property type="match status" value="1"/>
</dbReference>
<dbReference type="Gene3D" id="3.20.20.140">
    <property type="entry name" value="Metal-dependent hydrolases"/>
    <property type="match status" value="1"/>
</dbReference>
<dbReference type="Gene3D" id="2.30.40.10">
    <property type="entry name" value="Urease, subunit C, domain 1"/>
    <property type="match status" value="1"/>
</dbReference>
<dbReference type="HAMAP" id="MF_00372">
    <property type="entry name" value="HutI"/>
    <property type="match status" value="1"/>
</dbReference>
<dbReference type="InterPro" id="IPR006680">
    <property type="entry name" value="Amidohydro-rel"/>
</dbReference>
<dbReference type="InterPro" id="IPR005920">
    <property type="entry name" value="HutI"/>
</dbReference>
<dbReference type="InterPro" id="IPR011059">
    <property type="entry name" value="Metal-dep_hydrolase_composite"/>
</dbReference>
<dbReference type="InterPro" id="IPR032466">
    <property type="entry name" value="Metal_Hydrolase"/>
</dbReference>
<dbReference type="NCBIfam" id="TIGR01224">
    <property type="entry name" value="hutI"/>
    <property type="match status" value="1"/>
</dbReference>
<dbReference type="PANTHER" id="PTHR42752">
    <property type="entry name" value="IMIDAZOLONEPROPIONASE"/>
    <property type="match status" value="1"/>
</dbReference>
<dbReference type="PANTHER" id="PTHR42752:SF1">
    <property type="entry name" value="IMIDAZOLONEPROPIONASE-RELATED"/>
    <property type="match status" value="1"/>
</dbReference>
<dbReference type="Pfam" id="PF01979">
    <property type="entry name" value="Amidohydro_1"/>
    <property type="match status" value="1"/>
</dbReference>
<dbReference type="SUPFAM" id="SSF51338">
    <property type="entry name" value="Composite domain of metallo-dependent hydrolases"/>
    <property type="match status" value="1"/>
</dbReference>
<dbReference type="SUPFAM" id="SSF51556">
    <property type="entry name" value="Metallo-dependent hydrolases"/>
    <property type="match status" value="1"/>
</dbReference>
<proteinExistence type="inferred from homology"/>
<feature type="chain" id="PRO_0000306460" description="Imidazolonepropionase">
    <location>
        <begin position="1"/>
        <end position="411"/>
    </location>
</feature>
<feature type="binding site" evidence="1">
    <location>
        <position position="78"/>
    </location>
    <ligand>
        <name>Fe(3+)</name>
        <dbReference type="ChEBI" id="CHEBI:29034"/>
    </ligand>
</feature>
<feature type="binding site" evidence="1">
    <location>
        <position position="78"/>
    </location>
    <ligand>
        <name>Zn(2+)</name>
        <dbReference type="ChEBI" id="CHEBI:29105"/>
    </ligand>
</feature>
<feature type="binding site" evidence="1">
    <location>
        <position position="80"/>
    </location>
    <ligand>
        <name>Fe(3+)</name>
        <dbReference type="ChEBI" id="CHEBI:29034"/>
    </ligand>
</feature>
<feature type="binding site" evidence="1">
    <location>
        <position position="80"/>
    </location>
    <ligand>
        <name>Zn(2+)</name>
        <dbReference type="ChEBI" id="CHEBI:29105"/>
    </ligand>
</feature>
<feature type="binding site" evidence="1">
    <location>
        <position position="87"/>
    </location>
    <ligand>
        <name>4-imidazolone-5-propanoate</name>
        <dbReference type="ChEBI" id="CHEBI:77893"/>
    </ligand>
</feature>
<feature type="binding site" evidence="1">
    <location>
        <position position="150"/>
    </location>
    <ligand>
        <name>4-imidazolone-5-propanoate</name>
        <dbReference type="ChEBI" id="CHEBI:77893"/>
    </ligand>
</feature>
<feature type="binding site" evidence="1">
    <location>
        <position position="150"/>
    </location>
    <ligand>
        <name>N-formimidoyl-L-glutamate</name>
        <dbReference type="ChEBI" id="CHEBI:58928"/>
    </ligand>
</feature>
<feature type="binding site" evidence="1">
    <location>
        <position position="183"/>
    </location>
    <ligand>
        <name>4-imidazolone-5-propanoate</name>
        <dbReference type="ChEBI" id="CHEBI:77893"/>
    </ligand>
</feature>
<feature type="binding site" evidence="1">
    <location>
        <position position="248"/>
    </location>
    <ligand>
        <name>Fe(3+)</name>
        <dbReference type="ChEBI" id="CHEBI:29034"/>
    </ligand>
</feature>
<feature type="binding site" evidence="1">
    <location>
        <position position="248"/>
    </location>
    <ligand>
        <name>Zn(2+)</name>
        <dbReference type="ChEBI" id="CHEBI:29105"/>
    </ligand>
</feature>
<feature type="binding site" evidence="1">
    <location>
        <position position="251"/>
    </location>
    <ligand>
        <name>4-imidazolone-5-propanoate</name>
        <dbReference type="ChEBI" id="CHEBI:77893"/>
    </ligand>
</feature>
<feature type="binding site" evidence="1">
    <location>
        <position position="322"/>
    </location>
    <ligand>
        <name>Fe(3+)</name>
        <dbReference type="ChEBI" id="CHEBI:29034"/>
    </ligand>
</feature>
<feature type="binding site" evidence="1">
    <location>
        <position position="322"/>
    </location>
    <ligand>
        <name>Zn(2+)</name>
        <dbReference type="ChEBI" id="CHEBI:29105"/>
    </ligand>
</feature>
<feature type="binding site" evidence="1">
    <location>
        <position position="324"/>
    </location>
    <ligand>
        <name>N-formimidoyl-L-glutamate</name>
        <dbReference type="ChEBI" id="CHEBI:58928"/>
    </ligand>
</feature>
<feature type="binding site" evidence="1">
    <location>
        <position position="326"/>
    </location>
    <ligand>
        <name>N-formimidoyl-L-glutamate</name>
        <dbReference type="ChEBI" id="CHEBI:58928"/>
    </ligand>
</feature>
<feature type="binding site" evidence="1">
    <location>
        <position position="327"/>
    </location>
    <ligand>
        <name>4-imidazolone-5-propanoate</name>
        <dbReference type="ChEBI" id="CHEBI:77893"/>
    </ligand>
</feature>